<sequence length="158" mass="16888">MGVFTFQDEYTSTIAPAKLYKALVTDADIIIPKAVETIQSVEIVEGNGGPGTIKKLTFIEGGESKYVLHKIEAIDEANLGYNYSIVGGVGLPDTIEKISFETKLVEGANGGSIGKVTIKIETKGDAQPNEEEGKAAKARGDAFFKAIESYLSAHPDYN</sequence>
<feature type="chain" id="PRO_0000445930" description="Class 10 plant pathogenesis-related protein 2B">
    <location>
        <begin position="1"/>
        <end position="158"/>
    </location>
</feature>
<feature type="binding site" evidence="2 9">
    <location>
        <position position="8"/>
    </location>
    <ligand>
        <name>trans-zeatin</name>
        <dbReference type="ChEBI" id="CHEBI:16522"/>
        <label>1</label>
    </ligand>
</feature>
<feature type="binding site" evidence="2 9">
    <location>
        <position position="32"/>
    </location>
    <ligand>
        <name>Ca(2+)</name>
        <dbReference type="ChEBI" id="CHEBI:29108"/>
    </ligand>
</feature>
<feature type="binding site" evidence="2 9">
    <location>
        <position position="35"/>
    </location>
    <ligand>
        <name>Ca(2+)</name>
        <dbReference type="ChEBI" id="CHEBI:29108"/>
    </ligand>
</feature>
<feature type="binding site" evidence="2 9">
    <location>
        <position position="38"/>
    </location>
    <ligand>
        <name>Ca(2+)</name>
        <dbReference type="ChEBI" id="CHEBI:29108"/>
    </ligand>
</feature>
<feature type="binding site" evidence="2 4 9 12">
    <location>
        <position position="60"/>
    </location>
    <ligand>
        <name>trans-zeatin</name>
        <dbReference type="ChEBI" id="CHEBI:16522"/>
        <label>2</label>
    </ligand>
</feature>
<feature type="binding site" evidence="2 9">
    <location>
        <position position="69"/>
    </location>
    <ligand>
        <name>trans-zeatin</name>
        <dbReference type="ChEBI" id="CHEBI:16522"/>
        <label>3</label>
    </ligand>
</feature>
<feature type="binding site" evidence="2 9">
    <location>
        <position position="81"/>
    </location>
    <ligand>
        <name>trans-zeatin</name>
        <dbReference type="ChEBI" id="CHEBI:16522"/>
        <label>3</label>
    </ligand>
</feature>
<feature type="binding site" evidence="4 11 12">
    <location>
        <position position="83"/>
    </location>
    <ligand>
        <name>melatonin</name>
        <dbReference type="ChEBI" id="CHEBI:16796"/>
    </ligand>
</feature>
<feature type="binding site" evidence="2 9">
    <location>
        <position position="83"/>
    </location>
    <ligand>
        <name>trans-zeatin</name>
        <dbReference type="ChEBI" id="CHEBI:16522"/>
        <label>1</label>
    </ligand>
</feature>
<feature type="strand" evidence="13">
    <location>
        <begin position="3"/>
        <end position="14"/>
    </location>
</feature>
<feature type="helix" evidence="13">
    <location>
        <begin position="16"/>
        <end position="23"/>
    </location>
</feature>
<feature type="turn" evidence="13">
    <location>
        <begin position="24"/>
        <end position="26"/>
    </location>
</feature>
<feature type="helix" evidence="13">
    <location>
        <begin position="27"/>
        <end position="34"/>
    </location>
</feature>
<feature type="strand" evidence="13">
    <location>
        <begin position="38"/>
        <end position="49"/>
    </location>
</feature>
<feature type="strand" evidence="13">
    <location>
        <begin position="53"/>
        <end position="60"/>
    </location>
</feature>
<feature type="strand" evidence="13">
    <location>
        <begin position="63"/>
        <end position="75"/>
    </location>
</feature>
<feature type="helix" evidence="13">
    <location>
        <begin position="76"/>
        <end position="78"/>
    </location>
</feature>
<feature type="strand" evidence="13">
    <location>
        <begin position="80"/>
        <end position="90"/>
    </location>
</feature>
<feature type="strand" evidence="13">
    <location>
        <begin position="94"/>
        <end position="106"/>
    </location>
</feature>
<feature type="helix" evidence="14">
    <location>
        <begin position="108"/>
        <end position="110"/>
    </location>
</feature>
<feature type="strand" evidence="13">
    <location>
        <begin position="112"/>
        <end position="123"/>
    </location>
</feature>
<feature type="helix" evidence="13">
    <location>
        <begin position="130"/>
        <end position="153"/>
    </location>
</feature>
<reference key="1">
    <citation type="journal article" date="2000" name="Curr. Plant Sci. Biotechnol. Agric.">
        <title>Two subclasses of yellow lupin PR10 proteins and their possible function during the symbiosis development.</title>
        <authorList>
            <person name="Sikorski M.M."/>
            <person name="Handschuh L.A."/>
            <person name="Biesiadka J."/>
            <person name="Legocki A.B."/>
        </authorList>
    </citation>
    <scope>NUCLEOTIDE SEQUENCE [MRNA]</scope>
    <source>
        <strain>cv. Ventus</strain>
        <tissue>Root</tissue>
    </source>
</reference>
<reference key="2">
    <citation type="submission" date="2003-09" db="EMBL/GenBank/DDBJ databases">
        <title>Yellow lupine pathogenesis-related protein of class 10.</title>
        <authorList>
            <person name="Handschuh L."/>
            <person name="Sikorski M.M."/>
        </authorList>
    </citation>
    <scope>NUCLEOTIDE SEQUENCE [GENOMIC DNA]</scope>
</reference>
<reference key="3">
    <citation type="journal article" date="2013" name="Acta Crystallogr. D">
        <title>The landscape of cytokinin binding by a plant nodulin.</title>
        <authorList>
            <person name="Ruszkowski M."/>
            <person name="Szpotkowski K."/>
            <person name="Sikorski M."/>
            <person name="Jaskolski M."/>
        </authorList>
    </citation>
    <scope>REVIEW</scope>
</reference>
<reference evidence="9" key="4">
    <citation type="journal article" date="2008" name="J. Mol. Biol.">
        <title>Lupinus luteus pathogenesis-related protein as a reservoir for cytokinin.</title>
        <authorList>
            <person name="Fernandes H."/>
            <person name="Pasternak O."/>
            <person name="Bujacz G."/>
            <person name="Bujacz A."/>
            <person name="Sikorski M.M."/>
            <person name="Jaskolski M."/>
        </authorList>
    </citation>
    <scope>X-RAY CRYSTALLOGRAPHY (1.35 ANGSTROMS) IN COMPLEX WITH CALCIUM AND TRANS-ZEATIN</scope>
    <scope>FUNCTION</scope>
</reference>
<reference evidence="10" key="5">
    <citation type="journal article" date="2009" name="FEBS J.">
        <title>Cytokinin-induced structural adaptability of a Lupinus luteus PR-10 protein.</title>
        <authorList>
            <person name="Fernandes H."/>
            <person name="Bujacz A."/>
            <person name="Bujacz G."/>
            <person name="Jelen F."/>
            <person name="Jasinski M."/>
            <person name="Kachlicki P."/>
            <person name="Otlewski J."/>
            <person name="Sikorski M.M."/>
            <person name="Jaskolski M."/>
        </authorList>
    </citation>
    <scope>X-RAY CRYSTALLOGRAPHY (1.95 ANGSTROMS) IN COMPLEX WITH 1,3-DIPHENYLUREA</scope>
    <scope>FUNCTION</scope>
</reference>
<reference evidence="11 12" key="6">
    <citation type="journal article" date="2018" name="FEBS J.">
        <title>PR-10 proteins as potential mediators of melatonin-cytokinin cross-talk in plants: crystallographic studies of LlPR-10.2B isoform from yellow lupine.</title>
        <authorList>
            <person name="Sliwiak J."/>
            <person name="Sikorski M."/>
            <person name="Jaskolski M."/>
        </authorList>
    </citation>
    <scope>X-RAY CRYSTALLOGRAPHY (1.51 ANGSTROMS) OF 2-156 IN COMPLEXES WITH MELATONIN AND TRANS-ZEATIN</scope>
    <scope>FUNCTION</scope>
</reference>
<accession>Q9LLQ2</accession>
<keyword id="KW-0002">3D-structure</keyword>
<keyword id="KW-0020">Allergen</keyword>
<keyword id="KW-0106">Calcium</keyword>
<keyword id="KW-0963">Cytoplasm</keyword>
<keyword id="KW-0378">Hydrolase</keyword>
<keyword id="KW-0479">Metal-binding</keyword>
<keyword id="KW-0540">Nuclease</keyword>
<keyword id="KW-0568">Pathogenesis-related protein</keyword>
<keyword id="KW-0611">Plant defense</keyword>
<protein>
    <recommendedName>
        <fullName evidence="5">Class 10 plant pathogenesis-related protein 2B</fullName>
        <shortName evidence="5">LlPR10.2b</shortName>
        <shortName evidence="6">Ypr-10.2b</shortName>
        <ecNumber evidence="1">3.1.27.-</ecNumber>
    </recommendedName>
    <allergenName evidence="7">Lup l 4</allergenName>
</protein>
<gene>
    <name evidence="5" type="primary">PR10.2B</name>
</gene>
<evidence type="ECO:0000250" key="1">
    <source>
        <dbReference type="UniProtKB" id="P52779"/>
    </source>
</evidence>
<evidence type="ECO:0000269" key="2">
    <source>
    </source>
</evidence>
<evidence type="ECO:0000269" key="3">
    <source>
    </source>
</evidence>
<evidence type="ECO:0000269" key="4">
    <source>
    </source>
</evidence>
<evidence type="ECO:0000303" key="5">
    <source ref="1"/>
</evidence>
<evidence type="ECO:0000303" key="6">
    <source ref="2"/>
</evidence>
<evidence type="ECO:0000305" key="7"/>
<evidence type="ECO:0000305" key="8">
    <source>
    </source>
</evidence>
<evidence type="ECO:0007744" key="9">
    <source>
        <dbReference type="PDB" id="2QIM"/>
    </source>
</evidence>
<evidence type="ECO:0007744" key="10">
    <source>
        <dbReference type="PDB" id="3E85"/>
    </source>
</evidence>
<evidence type="ECO:0007744" key="11">
    <source>
        <dbReference type="PDB" id="5MXB"/>
    </source>
</evidence>
<evidence type="ECO:0007744" key="12">
    <source>
        <dbReference type="PDB" id="5MXW"/>
    </source>
</evidence>
<evidence type="ECO:0007829" key="13">
    <source>
        <dbReference type="PDB" id="2QIM"/>
    </source>
</evidence>
<evidence type="ECO:0007829" key="14">
    <source>
        <dbReference type="PDB" id="5MXB"/>
    </source>
</evidence>
<comment type="function">
    <text evidence="1 2 3 4">Class II ribonuclease (RNase) (By similarity). Binds to several cytokinins including natural adenine-type (e.g. trans-zeatin and kinetin) and artificial urea-type (e.g. N,N'-diphenylurea and N-phenyl-N'-(2-chloro-4-pyridyl)urea) hormones (PubMed:18406424, PubMed:19220853, PubMed:29630775). Interacts with melatonin (PubMed:29630775).</text>
</comment>
<comment type="subcellular location">
    <subcellularLocation>
        <location evidence="8">Cytoplasm</location>
        <location evidence="8">Cytosol</location>
    </subcellularLocation>
</comment>
<comment type="allergen">
    <text evidence="7">Causes an allergic reaction in human.</text>
</comment>
<comment type="similarity">
    <text evidence="7">Belongs to the BetVI family.</text>
</comment>
<name>P102B_LUPLU</name>
<dbReference type="EC" id="3.1.27.-" evidence="1"/>
<dbReference type="EMBL" id="AF170092">
    <property type="protein sequence ID" value="AAF77634.1"/>
    <property type="molecule type" value="mRNA"/>
</dbReference>
<dbReference type="EMBL" id="AY377535">
    <property type="protein sequence ID" value="AAQ83586.1"/>
    <property type="molecule type" value="Genomic_DNA"/>
</dbReference>
<dbReference type="PDB" id="2QIM">
    <property type="method" value="X-ray"/>
    <property type="resolution" value="1.35 A"/>
    <property type="chains" value="A=1-158"/>
</dbReference>
<dbReference type="PDB" id="3E85">
    <property type="method" value="X-ray"/>
    <property type="resolution" value="1.95 A"/>
    <property type="chains" value="A=1-158"/>
</dbReference>
<dbReference type="PDB" id="5MXB">
    <property type="method" value="X-ray"/>
    <property type="resolution" value="1.51 A"/>
    <property type="chains" value="A=2-156"/>
</dbReference>
<dbReference type="PDB" id="5MXW">
    <property type="method" value="X-ray"/>
    <property type="resolution" value="1.57 A"/>
    <property type="chains" value="A=2-157"/>
</dbReference>
<dbReference type="PDBsum" id="2QIM"/>
<dbReference type="PDBsum" id="3E85"/>
<dbReference type="PDBsum" id="5MXB"/>
<dbReference type="PDBsum" id="5MXW"/>
<dbReference type="SMR" id="Q9LLQ2"/>
<dbReference type="Allergome" id="9727">
    <property type="allergen name" value="Lup l 4"/>
</dbReference>
<dbReference type="EvolutionaryTrace" id="Q9LLQ2"/>
<dbReference type="GO" id="GO:0005829">
    <property type="term" value="C:cytosol"/>
    <property type="evidence" value="ECO:0000303"/>
    <property type="project" value="UniProtKB"/>
</dbReference>
<dbReference type="GO" id="GO:0005634">
    <property type="term" value="C:nucleus"/>
    <property type="evidence" value="ECO:0007669"/>
    <property type="project" value="TreeGrafter"/>
</dbReference>
<dbReference type="GO" id="GO:0010427">
    <property type="term" value="F:abscisic acid binding"/>
    <property type="evidence" value="ECO:0007669"/>
    <property type="project" value="InterPro"/>
</dbReference>
<dbReference type="GO" id="GO:0005509">
    <property type="term" value="F:calcium ion binding"/>
    <property type="evidence" value="ECO:0000314"/>
    <property type="project" value="UniProtKB"/>
</dbReference>
<dbReference type="GO" id="GO:0044373">
    <property type="term" value="F:cytokinin binding"/>
    <property type="evidence" value="ECO:0000314"/>
    <property type="project" value="UniProtKB"/>
</dbReference>
<dbReference type="GO" id="GO:1904408">
    <property type="term" value="F:melatonin binding"/>
    <property type="evidence" value="ECO:0000314"/>
    <property type="project" value="UniProtKB"/>
</dbReference>
<dbReference type="GO" id="GO:0004864">
    <property type="term" value="F:protein phosphatase inhibitor activity"/>
    <property type="evidence" value="ECO:0007669"/>
    <property type="project" value="InterPro"/>
</dbReference>
<dbReference type="GO" id="GO:0004540">
    <property type="term" value="F:RNA nuclease activity"/>
    <property type="evidence" value="ECO:0000250"/>
    <property type="project" value="UniProtKB"/>
</dbReference>
<dbReference type="GO" id="GO:0038023">
    <property type="term" value="F:signaling receptor activity"/>
    <property type="evidence" value="ECO:0007669"/>
    <property type="project" value="InterPro"/>
</dbReference>
<dbReference type="GO" id="GO:0009738">
    <property type="term" value="P:abscisic acid-activated signaling pathway"/>
    <property type="evidence" value="ECO:0007669"/>
    <property type="project" value="InterPro"/>
</dbReference>
<dbReference type="GO" id="GO:0006952">
    <property type="term" value="P:defense response"/>
    <property type="evidence" value="ECO:0007669"/>
    <property type="project" value="UniProtKB-KW"/>
</dbReference>
<dbReference type="CDD" id="cd07816">
    <property type="entry name" value="Bet_v1-like"/>
    <property type="match status" value="1"/>
</dbReference>
<dbReference type="FunFam" id="3.30.530.20:FF:000007">
    <property type="entry name" value="Major pollen allergen Bet v 1-A"/>
    <property type="match status" value="1"/>
</dbReference>
<dbReference type="Gene3D" id="3.30.530.20">
    <property type="match status" value="1"/>
</dbReference>
<dbReference type="InterPro" id="IPR000916">
    <property type="entry name" value="Bet_v_I/MLP"/>
</dbReference>
<dbReference type="InterPro" id="IPR024949">
    <property type="entry name" value="Bet_v_I_allergen"/>
</dbReference>
<dbReference type="InterPro" id="IPR050279">
    <property type="entry name" value="Plant_def-hormone_signal"/>
</dbReference>
<dbReference type="InterPro" id="IPR023393">
    <property type="entry name" value="START-like_dom_sf"/>
</dbReference>
<dbReference type="PANTHER" id="PTHR31213">
    <property type="entry name" value="OS08G0374000 PROTEIN-RELATED"/>
    <property type="match status" value="1"/>
</dbReference>
<dbReference type="PANTHER" id="PTHR31213:SF55">
    <property type="entry name" value="STRESS-INDUCED PROTEIN SAM22"/>
    <property type="match status" value="1"/>
</dbReference>
<dbReference type="Pfam" id="PF00407">
    <property type="entry name" value="Bet_v_1"/>
    <property type="match status" value="1"/>
</dbReference>
<dbReference type="PRINTS" id="PR00634">
    <property type="entry name" value="BETALLERGEN"/>
</dbReference>
<dbReference type="SUPFAM" id="SSF55961">
    <property type="entry name" value="Bet v1-like"/>
    <property type="match status" value="1"/>
</dbReference>
<proteinExistence type="evidence at protein level"/>
<organism>
    <name type="scientific">Lupinus luteus</name>
    <name type="common">European yellow lupine</name>
    <dbReference type="NCBI Taxonomy" id="3873"/>
    <lineage>
        <taxon>Eukaryota</taxon>
        <taxon>Viridiplantae</taxon>
        <taxon>Streptophyta</taxon>
        <taxon>Embryophyta</taxon>
        <taxon>Tracheophyta</taxon>
        <taxon>Spermatophyta</taxon>
        <taxon>Magnoliopsida</taxon>
        <taxon>eudicotyledons</taxon>
        <taxon>Gunneridae</taxon>
        <taxon>Pentapetalae</taxon>
        <taxon>rosids</taxon>
        <taxon>fabids</taxon>
        <taxon>Fabales</taxon>
        <taxon>Fabaceae</taxon>
        <taxon>Papilionoideae</taxon>
        <taxon>50 kb inversion clade</taxon>
        <taxon>genistoids sensu lato</taxon>
        <taxon>core genistoids</taxon>
        <taxon>Genisteae</taxon>
        <taxon>Lupinus</taxon>
    </lineage>
</organism>